<organism evidence="12">
    <name type="scientific">Arabidopsis thaliana</name>
    <name type="common">Mouse-ear cress</name>
    <dbReference type="NCBI Taxonomy" id="3702"/>
    <lineage>
        <taxon>Eukaryota</taxon>
        <taxon>Viridiplantae</taxon>
        <taxon>Streptophyta</taxon>
        <taxon>Embryophyta</taxon>
        <taxon>Tracheophyta</taxon>
        <taxon>Spermatophyta</taxon>
        <taxon>Magnoliopsida</taxon>
        <taxon>eudicotyledons</taxon>
        <taxon>Gunneridae</taxon>
        <taxon>Pentapetalae</taxon>
        <taxon>rosids</taxon>
        <taxon>malvids</taxon>
        <taxon>Brassicales</taxon>
        <taxon>Brassicaceae</taxon>
        <taxon>Camelineae</taxon>
        <taxon>Arabidopsis</taxon>
    </lineage>
</organism>
<sequence>MRWDLITAIVAALVVSVLADESGQMAPYRIHTLFSVECQNYFDWQTVGLMHSFLKSGQPGPITRLLSCTDDQKKTYRGMNLAPTFEVPSWSRHPKTGDWYPAINKPVGVLYWLQHSEEAKHVDWVVILDADMIIRGPIIPWELGAERGRPFAAHYGYLVGCDNLLVRLHTKHPELCDKVGGLLAMHIDDLRVLAPLWLSKTEDVRQDTAHWTTNLTGDIYGKGWISEMYGYSFGAAEAGLKHKINDDLMIYPGYVPREGVEPVLMHYGLPFSIGNWSFTKLDHHEDNIVYDCNRLFPEPPYPREVKIMEPDPSKRRGLILSLECMNTLNEGLILRHAENGCPKPKWTKYLSFLKSKTFMELTRPKLLAPGSVHILPDQHEPPPIDEFKGTYPKIHTLFSTECTTYFDWQTVGFMHSFRQSGQPGNITRLLSCTDEALKNYKGHDLAPTHYVPSMSRHPLTGDWYPAINKPAAVVHWLHHTNIDAEYVVILDADMILRGPITPWEFKAARGRPVSTPYDYLIGCDNDLARLHTRNPEACDKVGGVIIMHIEDLRKFAMYWLLKTQEVRADKEHYGKELTGDIYESGWISEMYGYSFGAAELNLRHSINKEIMIYPGYVPEPGADYRVFHYGLEFKVGNWSFDKANWRNTDLINKCWAKFPDPPSPSAVHQTDNDLRQRDLLSIECGQKLNEALFLHHKRRNCPEPGSESTEKISVSRKVGNIETKQTQGSDETKESSGSSESEGRFSTLKLWVIALWLISGVGFLVVMLLVFSTRRGRGTTRGKGYRNKRRTSYSNTGFLDTK</sequence>
<dbReference type="EC" id="2.4.1.-" evidence="8"/>
<dbReference type="EMBL" id="AB617523">
    <property type="protein sequence ID" value="BAL63044.1"/>
    <property type="molecule type" value="mRNA"/>
</dbReference>
<dbReference type="EMBL" id="AC009325">
    <property type="protein sequence ID" value="AAF01555.1"/>
    <property type="status" value="ALT_SEQ"/>
    <property type="molecule type" value="Genomic_DNA"/>
</dbReference>
<dbReference type="EMBL" id="AC010797">
    <property type="protein sequence ID" value="AAF03428.1"/>
    <property type="status" value="ALT_SEQ"/>
    <property type="molecule type" value="Genomic_DNA"/>
</dbReference>
<dbReference type="EMBL" id="CP002686">
    <property type="protein sequence ID" value="AEE73707.1"/>
    <property type="molecule type" value="Genomic_DNA"/>
</dbReference>
<dbReference type="EMBL" id="AY072107">
    <property type="protein sequence ID" value="AAL59929.1"/>
    <property type="molecule type" value="mRNA"/>
</dbReference>
<dbReference type="EMBL" id="AY096685">
    <property type="protein sequence ID" value="AAM20319.1"/>
    <property type="molecule type" value="mRNA"/>
</dbReference>
<dbReference type="RefSeq" id="NP_566148.2">
    <property type="nucleotide sequence ID" value="NM_111038.4"/>
</dbReference>
<dbReference type="FunCoup" id="Q8VYF9">
    <property type="interactions" value="870"/>
</dbReference>
<dbReference type="STRING" id="3702.Q8VYF9"/>
<dbReference type="GlyCosmos" id="Q8VYF9">
    <property type="glycosylation" value="4 sites, No reported glycans"/>
</dbReference>
<dbReference type="GlyGen" id="Q8VYF9">
    <property type="glycosylation" value="5 sites"/>
</dbReference>
<dbReference type="iPTMnet" id="Q8VYF9"/>
<dbReference type="PaxDb" id="3702-AT3G01720.1"/>
<dbReference type="ProteomicsDB" id="226711"/>
<dbReference type="EnsemblPlants" id="AT3G01720.1">
    <property type="protein sequence ID" value="AT3G01720.1"/>
    <property type="gene ID" value="AT3G01720"/>
</dbReference>
<dbReference type="GeneID" id="821091"/>
<dbReference type="Gramene" id="AT3G01720.1">
    <property type="protein sequence ID" value="AT3G01720.1"/>
    <property type="gene ID" value="AT3G01720"/>
</dbReference>
<dbReference type="KEGG" id="ath:AT3G01720"/>
<dbReference type="Araport" id="AT3G01720"/>
<dbReference type="TAIR" id="AT3G01720">
    <property type="gene designation" value="ATSERGT1"/>
</dbReference>
<dbReference type="eggNOG" id="ENOG502QQG8">
    <property type="taxonomic scope" value="Eukaryota"/>
</dbReference>
<dbReference type="HOGENOM" id="CLU_018998_1_0_1"/>
<dbReference type="InParanoid" id="Q8VYF9"/>
<dbReference type="OMA" id="EVGLQHK"/>
<dbReference type="PhylomeDB" id="Q8VYF9"/>
<dbReference type="PRO" id="PR:Q8VYF9"/>
<dbReference type="Proteomes" id="UP000006548">
    <property type="component" value="Chromosome 3"/>
</dbReference>
<dbReference type="ExpressionAtlas" id="Q8VYF9">
    <property type="expression patterns" value="baseline and differential"/>
</dbReference>
<dbReference type="GO" id="GO:0005789">
    <property type="term" value="C:endoplasmic reticulum membrane"/>
    <property type="evidence" value="ECO:0007669"/>
    <property type="project" value="UniProtKB-SubCell"/>
</dbReference>
<dbReference type="GO" id="GO:0016757">
    <property type="term" value="F:glycosyltransferase activity"/>
    <property type="evidence" value="ECO:0007669"/>
    <property type="project" value="UniProtKB-KW"/>
</dbReference>
<dbReference type="InterPro" id="IPR056508">
    <property type="entry name" value="HPAT-like"/>
</dbReference>
<dbReference type="InterPro" id="IPR044845">
    <property type="entry name" value="HPAT/SRGT1-like"/>
</dbReference>
<dbReference type="PANTHER" id="PTHR31485">
    <property type="entry name" value="PEPTIDYL SERINE ALPHA-GALACTOSYLTRANSFERASE"/>
    <property type="match status" value="1"/>
</dbReference>
<dbReference type="PANTHER" id="PTHR31485:SF7">
    <property type="entry name" value="PEPTIDYL SERINE ALPHA-GALACTOSYLTRANSFERASE"/>
    <property type="match status" value="1"/>
</dbReference>
<dbReference type="Pfam" id="PF23452">
    <property type="entry name" value="HPAT"/>
    <property type="match status" value="2"/>
</dbReference>
<comment type="function">
    <text evidence="4">Glycosyltransferase involved in the O-galactosylation of several proteins including extensins. Catalyzes the transfer of alpha-galactosyl to Ser residues. Hydroxylation of proline residues adjacent to the serine acceptor is required for activity.</text>
</comment>
<comment type="subcellular location">
    <subcellularLocation>
        <location evidence="4">Endoplasmic reticulum membrane</location>
        <topology evidence="1">Single-pass type I membrane protein</topology>
    </subcellularLocation>
</comment>
<comment type="disruption phenotype">
    <text evidence="4 5">Reduced root hair length (PubMed:25944827). Longer roots and larger leaves (PubMed:24914209).</text>
</comment>
<comment type="sequence caution" evidence="8">
    <conflict type="erroneous gene model prediction">
        <sequence resource="EMBL-CDS" id="AAF01555"/>
    </conflict>
</comment>
<comment type="sequence caution" evidence="8">
    <conflict type="erroneous gene model prediction">
        <sequence resource="EMBL-CDS" id="AAF03428"/>
    </conflict>
</comment>
<accession>Q8VYF9</accession>
<accession>Q9S7Y6</accession>
<evidence type="ECO:0000255" key="1"/>
<evidence type="ECO:0000255" key="2">
    <source>
        <dbReference type="PROSITE-ProRule" id="PRU00498"/>
    </source>
</evidence>
<evidence type="ECO:0000256" key="3">
    <source>
        <dbReference type="SAM" id="MobiDB-lite"/>
    </source>
</evidence>
<evidence type="ECO:0000269" key="4">
    <source>
    </source>
</evidence>
<evidence type="ECO:0000269" key="5">
    <source>
    </source>
</evidence>
<evidence type="ECO:0000303" key="6">
    <source>
    </source>
</evidence>
<evidence type="ECO:0000303" key="7">
    <source>
    </source>
</evidence>
<evidence type="ECO:0000305" key="8"/>
<evidence type="ECO:0000312" key="9">
    <source>
        <dbReference type="Araport" id="AT3G01720"/>
    </source>
</evidence>
<evidence type="ECO:0000312" key="10">
    <source>
        <dbReference type="EMBL" id="AAF01555.1"/>
    </source>
</evidence>
<evidence type="ECO:0000312" key="11">
    <source>
        <dbReference type="EMBL" id="AAF03428.1"/>
    </source>
</evidence>
<evidence type="ECO:0000312" key="12">
    <source>
        <dbReference type="EMBL" id="AAL59929.1"/>
    </source>
</evidence>
<reference key="1">
    <citation type="journal article" date="2014" name="J. Biol. Chem.">
        <title>Identification of a novel peptidyl serine alpha-galactosyltransferase gene family in plants.</title>
        <authorList>
            <person name="Saito F."/>
            <person name="Suyama A."/>
            <person name="Oka T."/>
            <person name="Yoko-o T."/>
            <person name="Matsuoka K."/>
            <person name="Jigami Y."/>
            <person name="Shimma Y."/>
        </authorList>
    </citation>
    <scope>NUCLEOTIDE SEQUENCE [MRNA]</scope>
    <scope>FUNCTION</scope>
    <scope>DISRUPTION PHENOTYPE</scope>
    <scope>SUBCELLULAR LOCATION</scope>
</reference>
<reference key="2">
    <citation type="journal article" date="2000" name="Nature">
        <title>Sequence and analysis of chromosome 3 of the plant Arabidopsis thaliana.</title>
        <authorList>
            <person name="Salanoubat M."/>
            <person name="Lemcke K."/>
            <person name="Rieger M."/>
            <person name="Ansorge W."/>
            <person name="Unseld M."/>
            <person name="Fartmann B."/>
            <person name="Valle G."/>
            <person name="Bloecker H."/>
            <person name="Perez-Alonso M."/>
            <person name="Obermaier B."/>
            <person name="Delseny M."/>
            <person name="Boutry M."/>
            <person name="Grivell L.A."/>
            <person name="Mache R."/>
            <person name="Puigdomenech P."/>
            <person name="De Simone V."/>
            <person name="Choisne N."/>
            <person name="Artiguenave F."/>
            <person name="Robert C."/>
            <person name="Brottier P."/>
            <person name="Wincker P."/>
            <person name="Cattolico L."/>
            <person name="Weissenbach J."/>
            <person name="Saurin W."/>
            <person name="Quetier F."/>
            <person name="Schaefer M."/>
            <person name="Mueller-Auer S."/>
            <person name="Gabel C."/>
            <person name="Fuchs M."/>
            <person name="Benes V."/>
            <person name="Wurmbach E."/>
            <person name="Drzonek H."/>
            <person name="Erfle H."/>
            <person name="Jordan N."/>
            <person name="Bangert S."/>
            <person name="Wiedelmann R."/>
            <person name="Kranz H."/>
            <person name="Voss H."/>
            <person name="Holland R."/>
            <person name="Brandt P."/>
            <person name="Nyakatura G."/>
            <person name="Vezzi A."/>
            <person name="D'Angelo M."/>
            <person name="Pallavicini A."/>
            <person name="Toppo S."/>
            <person name="Simionati B."/>
            <person name="Conrad A."/>
            <person name="Hornischer K."/>
            <person name="Kauer G."/>
            <person name="Loehnert T.-H."/>
            <person name="Nordsiek G."/>
            <person name="Reichelt J."/>
            <person name="Scharfe M."/>
            <person name="Schoen O."/>
            <person name="Bargues M."/>
            <person name="Terol J."/>
            <person name="Climent J."/>
            <person name="Navarro P."/>
            <person name="Collado C."/>
            <person name="Perez-Perez A."/>
            <person name="Ottenwaelder B."/>
            <person name="Duchemin D."/>
            <person name="Cooke R."/>
            <person name="Laudie M."/>
            <person name="Berger-Llauro C."/>
            <person name="Purnelle B."/>
            <person name="Masuy D."/>
            <person name="de Haan M."/>
            <person name="Maarse A.C."/>
            <person name="Alcaraz J.-P."/>
            <person name="Cottet A."/>
            <person name="Casacuberta E."/>
            <person name="Monfort A."/>
            <person name="Argiriou A."/>
            <person name="Flores M."/>
            <person name="Liguori R."/>
            <person name="Vitale D."/>
            <person name="Mannhaupt G."/>
            <person name="Haase D."/>
            <person name="Schoof H."/>
            <person name="Rudd S."/>
            <person name="Zaccaria P."/>
            <person name="Mewes H.-W."/>
            <person name="Mayer K.F.X."/>
            <person name="Kaul S."/>
            <person name="Town C.D."/>
            <person name="Koo H.L."/>
            <person name="Tallon L.J."/>
            <person name="Jenkins J."/>
            <person name="Rooney T."/>
            <person name="Rizzo M."/>
            <person name="Walts A."/>
            <person name="Utterback T."/>
            <person name="Fujii C.Y."/>
            <person name="Shea T.P."/>
            <person name="Creasy T.H."/>
            <person name="Haas B."/>
            <person name="Maiti R."/>
            <person name="Wu D."/>
            <person name="Peterson J."/>
            <person name="Van Aken S."/>
            <person name="Pai G."/>
            <person name="Militscher J."/>
            <person name="Sellers P."/>
            <person name="Gill J.E."/>
            <person name="Feldblyum T.V."/>
            <person name="Preuss D."/>
            <person name="Lin X."/>
            <person name="Nierman W.C."/>
            <person name="Salzberg S.L."/>
            <person name="White O."/>
            <person name="Venter J.C."/>
            <person name="Fraser C.M."/>
            <person name="Kaneko T."/>
            <person name="Nakamura Y."/>
            <person name="Sato S."/>
            <person name="Kato T."/>
            <person name="Asamizu E."/>
            <person name="Sasamoto S."/>
            <person name="Kimura T."/>
            <person name="Idesawa K."/>
            <person name="Kawashima K."/>
            <person name="Kishida Y."/>
            <person name="Kiyokawa C."/>
            <person name="Kohara M."/>
            <person name="Matsumoto M."/>
            <person name="Matsuno A."/>
            <person name="Muraki A."/>
            <person name="Nakayama S."/>
            <person name="Nakazaki N."/>
            <person name="Shinpo S."/>
            <person name="Takeuchi C."/>
            <person name="Wada T."/>
            <person name="Watanabe A."/>
            <person name="Yamada M."/>
            <person name="Yasuda M."/>
            <person name="Tabata S."/>
        </authorList>
    </citation>
    <scope>NUCLEOTIDE SEQUENCE [LARGE SCALE GENOMIC DNA]</scope>
    <source>
        <strain>cv. Columbia</strain>
    </source>
</reference>
<reference key="3">
    <citation type="journal article" date="2017" name="Plant J.">
        <title>Araport11: a complete reannotation of the Arabidopsis thaliana reference genome.</title>
        <authorList>
            <person name="Cheng C.Y."/>
            <person name="Krishnakumar V."/>
            <person name="Chan A.P."/>
            <person name="Thibaud-Nissen F."/>
            <person name="Schobel S."/>
            <person name="Town C.D."/>
        </authorList>
    </citation>
    <scope>GENOME REANNOTATION</scope>
    <source>
        <strain>cv. Columbia</strain>
    </source>
</reference>
<reference key="4">
    <citation type="journal article" date="2003" name="Science">
        <title>Empirical analysis of transcriptional activity in the Arabidopsis genome.</title>
        <authorList>
            <person name="Yamada K."/>
            <person name="Lim J."/>
            <person name="Dale J.M."/>
            <person name="Chen H."/>
            <person name="Shinn P."/>
            <person name="Palm C.J."/>
            <person name="Southwick A.M."/>
            <person name="Wu H.C."/>
            <person name="Kim C.J."/>
            <person name="Nguyen M."/>
            <person name="Pham P.K."/>
            <person name="Cheuk R.F."/>
            <person name="Karlin-Newmann G."/>
            <person name="Liu S.X."/>
            <person name="Lam B."/>
            <person name="Sakano H."/>
            <person name="Wu T."/>
            <person name="Yu G."/>
            <person name="Miranda M."/>
            <person name="Quach H.L."/>
            <person name="Tripp M."/>
            <person name="Chang C.H."/>
            <person name="Lee J.M."/>
            <person name="Toriumi M.J."/>
            <person name="Chan M.M."/>
            <person name="Tang C.C."/>
            <person name="Onodera C.S."/>
            <person name="Deng J.M."/>
            <person name="Akiyama K."/>
            <person name="Ansari Y."/>
            <person name="Arakawa T."/>
            <person name="Banh J."/>
            <person name="Banno F."/>
            <person name="Bowser L."/>
            <person name="Brooks S.Y."/>
            <person name="Carninci P."/>
            <person name="Chao Q."/>
            <person name="Choy N."/>
            <person name="Enju A."/>
            <person name="Goldsmith A.D."/>
            <person name="Gurjal M."/>
            <person name="Hansen N.F."/>
            <person name="Hayashizaki Y."/>
            <person name="Johnson-Hopson C."/>
            <person name="Hsuan V.W."/>
            <person name="Iida K."/>
            <person name="Karnes M."/>
            <person name="Khan S."/>
            <person name="Koesema E."/>
            <person name="Ishida J."/>
            <person name="Jiang P.X."/>
            <person name="Jones T."/>
            <person name="Kawai J."/>
            <person name="Kamiya A."/>
            <person name="Meyers C."/>
            <person name="Nakajima M."/>
            <person name="Narusaka M."/>
            <person name="Seki M."/>
            <person name="Sakurai T."/>
            <person name="Satou M."/>
            <person name="Tamse R."/>
            <person name="Vaysberg M."/>
            <person name="Wallender E.K."/>
            <person name="Wong C."/>
            <person name="Yamamura Y."/>
            <person name="Yuan S."/>
            <person name="Shinozaki K."/>
            <person name="Davis R.W."/>
            <person name="Theologis A."/>
            <person name="Ecker J.R."/>
        </authorList>
    </citation>
    <scope>NUCLEOTIDE SEQUENCE [LARGE SCALE MRNA]</scope>
    <source>
        <strain>cv. Columbia</strain>
    </source>
</reference>
<reference key="5">
    <citation type="journal article" date="2015" name="Plant Physiol.">
        <title>Low sugar is not always good: impact of specific o-glycan defects on tip growth in Arabidopsis.</title>
        <authorList>
            <person name="Velasquez S.M."/>
            <person name="Marzol E."/>
            <person name="Borassi C."/>
            <person name="Pol-Fachin L."/>
            <person name="Ricardi M.M."/>
            <person name="Mangano S."/>
            <person name="Juarez S.P."/>
            <person name="Salter J.D."/>
            <person name="Dorosz J.G."/>
            <person name="Marcus S.E."/>
            <person name="Knox J.P."/>
            <person name="Dinneny J.R."/>
            <person name="Iusem N.D."/>
            <person name="Verli H."/>
            <person name="Estevez J.M."/>
        </authorList>
    </citation>
    <scope>DISRUPTION PHENOTYPE</scope>
</reference>
<gene>
    <name evidence="7" type="primary">SERGT1</name>
    <name evidence="6" type="synonym">SGT1</name>
    <name evidence="9" type="ordered locus">At3g01720</name>
    <name evidence="11" type="ORF">F28J7.5</name>
    <name evidence="10" type="ORF">F4P13.27</name>
</gene>
<protein>
    <recommendedName>
        <fullName evidence="6">Peptidyl serine alpha-galactosyltransferase</fullName>
        <shortName evidence="6">AtSGT1</shortName>
        <ecNumber evidence="8">2.4.1.-</ecNumber>
    </recommendedName>
</protein>
<feature type="signal peptide" evidence="1">
    <location>
        <begin position="1"/>
        <end position="19"/>
    </location>
</feature>
<feature type="chain" id="PRO_5007714630" description="Peptidyl serine alpha-galactosyltransferase">
    <location>
        <begin position="20"/>
        <end position="802"/>
    </location>
</feature>
<feature type="topological domain" description="Extracellular" evidence="8">
    <location>
        <begin position="20"/>
        <end position="750"/>
    </location>
</feature>
<feature type="transmembrane region" description="Helical" evidence="1">
    <location>
        <begin position="751"/>
        <end position="771"/>
    </location>
</feature>
<feature type="topological domain" description="Cytoplasmic" evidence="8">
    <location>
        <begin position="772"/>
        <end position="802"/>
    </location>
</feature>
<feature type="region of interest" description="Disordered" evidence="3">
    <location>
        <begin position="699"/>
        <end position="741"/>
    </location>
</feature>
<feature type="region of interest" description="Disordered" evidence="3">
    <location>
        <begin position="777"/>
        <end position="802"/>
    </location>
</feature>
<feature type="compositionally biased region" description="Basic residues" evidence="3">
    <location>
        <begin position="777"/>
        <end position="791"/>
    </location>
</feature>
<feature type="compositionally biased region" description="Polar residues" evidence="3">
    <location>
        <begin position="792"/>
        <end position="802"/>
    </location>
</feature>
<feature type="glycosylation site" description="N-linked (GlcNAc...) asparagine" evidence="2">
    <location>
        <position position="214"/>
    </location>
</feature>
<feature type="glycosylation site" description="N-linked (GlcNAc...) asparagine" evidence="2">
    <location>
        <position position="275"/>
    </location>
</feature>
<feature type="glycosylation site" description="N-linked (GlcNAc...) asparagine" evidence="2">
    <location>
        <position position="425"/>
    </location>
</feature>
<feature type="glycosylation site" description="N-linked (GlcNAc...) asparagine" evidence="2">
    <location>
        <position position="637"/>
    </location>
</feature>
<name>SRGT1_ARATH</name>
<keyword id="KW-0256">Endoplasmic reticulum</keyword>
<keyword id="KW-0325">Glycoprotein</keyword>
<keyword id="KW-0328">Glycosyltransferase</keyword>
<keyword id="KW-0472">Membrane</keyword>
<keyword id="KW-1185">Reference proteome</keyword>
<keyword id="KW-0732">Signal</keyword>
<keyword id="KW-0808">Transferase</keyword>
<keyword id="KW-0812">Transmembrane</keyword>
<keyword id="KW-1133">Transmembrane helix</keyword>
<proteinExistence type="evidence at transcript level"/>